<organism>
    <name type="scientific">Mus musculus</name>
    <name type="common">Mouse</name>
    <dbReference type="NCBI Taxonomy" id="10090"/>
    <lineage>
        <taxon>Eukaryota</taxon>
        <taxon>Metazoa</taxon>
        <taxon>Chordata</taxon>
        <taxon>Craniata</taxon>
        <taxon>Vertebrata</taxon>
        <taxon>Euteleostomi</taxon>
        <taxon>Mammalia</taxon>
        <taxon>Eutheria</taxon>
        <taxon>Euarchontoglires</taxon>
        <taxon>Glires</taxon>
        <taxon>Rodentia</taxon>
        <taxon>Myomorpha</taxon>
        <taxon>Muroidea</taxon>
        <taxon>Muridae</taxon>
        <taxon>Murinae</taxon>
        <taxon>Mus</taxon>
        <taxon>Mus</taxon>
    </lineage>
</organism>
<sequence>MKNRFLVLGLVAVVLVFVIIGLCIWLPYTSGKPDHVYSRAAVATDAKRCSEIGRDILQEGGSVVDAAIASLLCMGLMNAHSMGIGGGLFFTIYNSTTGKVEVINAREVAPRLANTTMFNNSKDSEEGGLSVAVPGEIRGYELAHQRHGRLPWARLFQPSIQLARHGFPVGKGLAIALDKKRDVIEKTPALCEVFCRQGKVLQEGETVTMPKLADTLQILAQEGAKAFYNGSLTAQIVKDIQEAGGIMTVEDLNNYRAELIEHPMSIGLGDATLYVPSAPLSGPVLILILNILKGYNFSPKSVATPEQKALTYHRIVEAFRFAYAKRTMLGDPKFVDVSQVIRNMSSEFYATQLRARITDETTHPAAYYEPEFYLQDDGGTAHLSAVSEDGSAVAATSTINLYFGSKVLSRVSGILFNDEMDDFSSPNFINQFRVAPSPANFIKPGKQPLSSMCPSIILDKDGQVRMVVGASGGTQITTSVALAIINSLWFGYDVKRAVEEPRLHNQLLPNTTTVEKDIDQVVTAGLKIRHHHTEVTPTFIAVVQAVVRASGGWAAASDSRKGGEPAGY</sequence>
<evidence type="ECO:0000250" key="1">
    <source>
        <dbReference type="UniProtKB" id="P07314"/>
    </source>
</evidence>
<evidence type="ECO:0000250" key="2">
    <source>
        <dbReference type="UniProtKB" id="P19440"/>
    </source>
</evidence>
<evidence type="ECO:0000255" key="3"/>
<evidence type="ECO:0000269" key="4">
    <source>
    </source>
</evidence>
<evidence type="ECO:0000269" key="5">
    <source>
    </source>
</evidence>
<evidence type="ECO:0000269" key="6">
    <source>
    </source>
</evidence>
<evidence type="ECO:0000269" key="7">
    <source>
    </source>
</evidence>
<evidence type="ECO:0000305" key="8"/>
<name>GGT1_MOUSE</name>
<protein>
    <recommendedName>
        <fullName>Glutathione hydrolase 1 proenzyme</fullName>
        <ecNumber evidence="2">3.4.19.13</ecNumber>
    </recommendedName>
    <alternativeName>
        <fullName>Gamma-glutamyltransferase 1</fullName>
    </alternativeName>
    <alternativeName>
        <fullName>Gamma-glutamyltranspeptidase 1</fullName>
        <shortName>GGT 1</shortName>
        <ecNumber evidence="2">2.3.2.2</ecNumber>
    </alternativeName>
    <alternativeName>
        <fullName>Leukotriene-C4 hydrolase</fullName>
        <ecNumber evidence="1">3.4.19.14</ecNumber>
    </alternativeName>
    <cdAntigenName>CD224</cdAntigenName>
    <component>
        <recommendedName>
            <fullName>Glutathione hydrolase 1 heavy chain</fullName>
        </recommendedName>
    </component>
    <component>
        <recommendedName>
            <fullName>Glutathione hydrolase 1 light chain</fullName>
        </recommendedName>
    </component>
</protein>
<comment type="function">
    <text evidence="2 4">Cleaves the gamma-glutamyl bond of extracellular glutathione (gamma-Glu-Cys-Gly), glutathione conjugates (such as maresin conjugate (13R)-S-glutathionyl-(14S)-hydroxy-(4Z,7Z,9E,11E,16Z,19Z)-docosahexaenoate, MCTR1) and other gamma-glutamyl compounds (such as leukotriene C4, LTC4). The metabolism of glutathione by GGT1 releases free glutamate and the dipeptide cysteinyl-glycine, which is hydrolyzed to cysteine and glycine by dipeptidases. In the presence of high concentrations of dipeptides and some amino acids, can also catalyze a transpeptidation reaction, transferring the gamma-glutamyl moiety to an acceptor amino acid to form a new gamma-glutamyl compound. Contributes to cysteine homeostasis, glutathione homeostasis and in the conversion of the leukotriene LTC4 to LTD4 (By similarity). Indirectly regulates multiple aspects of skeletal biology (PubMed:12810527).</text>
</comment>
<comment type="catalytic activity">
    <reaction evidence="2">
        <text>an N-terminal (5-L-glutamyl)-[peptide] + an alpha-amino acid = 5-L-glutamyl amino acid + an N-terminal L-alpha-aminoacyl-[peptide]</text>
        <dbReference type="Rhea" id="RHEA:23904"/>
        <dbReference type="Rhea" id="RHEA-COMP:9780"/>
        <dbReference type="Rhea" id="RHEA-COMP:9795"/>
        <dbReference type="ChEBI" id="CHEBI:77644"/>
        <dbReference type="ChEBI" id="CHEBI:78597"/>
        <dbReference type="ChEBI" id="CHEBI:78599"/>
        <dbReference type="ChEBI" id="CHEBI:78608"/>
        <dbReference type="EC" id="2.3.2.2"/>
    </reaction>
    <physiologicalReaction direction="left-to-right" evidence="2">
        <dbReference type="Rhea" id="RHEA:23905"/>
    </physiologicalReaction>
    <physiologicalReaction direction="right-to-left" evidence="1">
        <dbReference type="Rhea" id="RHEA:23906"/>
    </physiologicalReaction>
</comment>
<comment type="catalytic activity">
    <reaction evidence="2">
        <text>glutathione + H2O = L-cysteinylglycine + L-glutamate</text>
        <dbReference type="Rhea" id="RHEA:28807"/>
        <dbReference type="ChEBI" id="CHEBI:15377"/>
        <dbReference type="ChEBI" id="CHEBI:29985"/>
        <dbReference type="ChEBI" id="CHEBI:57925"/>
        <dbReference type="ChEBI" id="CHEBI:61694"/>
        <dbReference type="EC" id="3.4.19.13"/>
    </reaction>
    <physiologicalReaction direction="left-to-right" evidence="2">
        <dbReference type="Rhea" id="RHEA:28808"/>
    </physiologicalReaction>
</comment>
<comment type="catalytic activity">
    <reaction evidence="2">
        <text>an S-substituted glutathione + H2O = an S-substituted L-cysteinylglycine + L-glutamate</text>
        <dbReference type="Rhea" id="RHEA:59468"/>
        <dbReference type="ChEBI" id="CHEBI:15377"/>
        <dbReference type="ChEBI" id="CHEBI:29985"/>
        <dbReference type="ChEBI" id="CHEBI:90779"/>
        <dbReference type="ChEBI" id="CHEBI:143103"/>
        <dbReference type="EC" id="3.4.19.13"/>
    </reaction>
    <physiologicalReaction direction="left-to-right" evidence="2">
        <dbReference type="Rhea" id="RHEA:59469"/>
    </physiologicalReaction>
</comment>
<comment type="catalytic activity">
    <reaction evidence="1">
        <text>leukotriene C4 + H2O = leukotriene D4 + L-glutamate</text>
        <dbReference type="Rhea" id="RHEA:31563"/>
        <dbReference type="ChEBI" id="CHEBI:15377"/>
        <dbReference type="ChEBI" id="CHEBI:29985"/>
        <dbReference type="ChEBI" id="CHEBI:57973"/>
        <dbReference type="ChEBI" id="CHEBI:63166"/>
        <dbReference type="EC" id="3.4.19.14"/>
    </reaction>
    <physiologicalReaction direction="left-to-right" evidence="2">
        <dbReference type="Rhea" id="RHEA:31564"/>
    </physiologicalReaction>
</comment>
<comment type="catalytic activity">
    <reaction evidence="2">
        <text>(13R)-S-glutathionyl-(14S)-hydroxy-(4Z,7Z,9E,11E,16Z,19Z)-docosahexaenoate + H2O = (13R)-S-cysteinylglycyl-(14S)-hydroxy-(4Z,7Z,9E,11E,16Z,19Z)-docosahexaenoate + L-glutamate</text>
        <dbReference type="Rhea" id="RHEA:53512"/>
        <dbReference type="ChEBI" id="CHEBI:15377"/>
        <dbReference type="ChEBI" id="CHEBI:29985"/>
        <dbReference type="ChEBI" id="CHEBI:137407"/>
        <dbReference type="ChEBI" id="CHEBI:137408"/>
    </reaction>
    <physiologicalReaction direction="left-to-right" evidence="2">
        <dbReference type="Rhea" id="RHEA:53513"/>
    </physiologicalReaction>
</comment>
<comment type="activity regulation">
    <text evidence="2">Activated by autocatalytic cleavage.</text>
</comment>
<comment type="pathway">
    <text evidence="2">Sulfur metabolism; glutathione metabolism.</text>
</comment>
<comment type="pathway">
    <text evidence="2">Lipid metabolism; leukotriene D4 biosynthesis.</text>
</comment>
<comment type="subunit">
    <text evidence="2">Heterodimer composed of the light and heavy chains. The active site is located in the light chain.</text>
</comment>
<comment type="subcellular location">
    <subcellularLocation>
        <location evidence="2">Cell membrane</location>
        <topology evidence="1">Single-pass type II membrane protein</topology>
    </subcellularLocation>
</comment>
<comment type="PTM">
    <text evidence="2">N-glycosylated on both chains.</text>
</comment>
<comment type="PTM">
    <text evidence="2">Cleaved by autocatalysis into a large and a small subunit and the autocatalytic cleavage is essential to the functional activation of the enzyme.</text>
</comment>
<comment type="disease">
    <text evidence="7">Defects in Ggt1 are a cause of glutathionuria, severe growth failure, reduced life spans and infertility. Ggt1-deficient mice have multiple metabolic abnormalities and are dwarf. Some abnormalities can be ameliorated by N-acetylcysteine treatment.</text>
</comment>
<comment type="disruption phenotype">
    <text evidence="4 6">Deficient mice have growth retardation, skeletal abnormalities. They are sexually immature, develop cataracts, and have coats with a gray cast. Most die between 10 and 18 weeks. They cannot break down GSH into its constituent amino acids as it passes through the proximal tubules of the kidney. They excrete large amounts of GSH in their urine, leading to a fatal cysteine deficiency.</text>
</comment>
<comment type="similarity">
    <text evidence="8">Belongs to the gamma-glutamyltransferase family.</text>
</comment>
<feature type="chain" id="PRO_0000011060" description="Glutathione hydrolase 1 heavy chain">
    <location>
        <begin position="1"/>
        <end position="379"/>
    </location>
</feature>
<feature type="chain" id="PRO_0000011061" description="Glutathione hydrolase 1 light chain">
    <location>
        <begin position="380"/>
        <end position="568"/>
    </location>
</feature>
<feature type="topological domain" description="Cytoplasmic" evidence="1">
    <location>
        <begin position="1"/>
        <end position="4"/>
    </location>
</feature>
<feature type="transmembrane region" description="Helical; Signal-anchor for type II membrane protein" evidence="1">
    <location>
        <begin position="5"/>
        <end position="26"/>
    </location>
</feature>
<feature type="topological domain" description="Extracellular" evidence="1">
    <location>
        <begin position="27"/>
        <end position="568"/>
    </location>
</feature>
<feature type="active site" description="Nucleophile" evidence="2">
    <location>
        <position position="380"/>
    </location>
</feature>
<feature type="binding site" evidence="2">
    <location>
        <position position="106"/>
    </location>
    <ligand>
        <name>L-glutamate</name>
        <dbReference type="ChEBI" id="CHEBI:29985"/>
    </ligand>
</feature>
<feature type="binding site" evidence="2">
    <location>
        <begin position="398"/>
        <end position="400"/>
    </location>
    <ligand>
        <name>L-glutamate</name>
        <dbReference type="ChEBI" id="CHEBI:29985"/>
    </ligand>
</feature>
<feature type="binding site" evidence="2">
    <location>
        <position position="419"/>
    </location>
    <ligand>
        <name>L-glutamate</name>
        <dbReference type="ChEBI" id="CHEBI:29985"/>
    </ligand>
</feature>
<feature type="binding site" evidence="2">
    <location>
        <position position="422"/>
    </location>
    <ligand>
        <name>L-glutamate</name>
        <dbReference type="ChEBI" id="CHEBI:29985"/>
    </ligand>
</feature>
<feature type="binding site" evidence="2">
    <location>
        <begin position="450"/>
        <end position="451"/>
    </location>
    <ligand>
        <name>L-glutamate</name>
        <dbReference type="ChEBI" id="CHEBI:29985"/>
    </ligand>
</feature>
<feature type="binding site" evidence="2">
    <location>
        <position position="473"/>
    </location>
    <ligand>
        <name>L-glutamate</name>
        <dbReference type="ChEBI" id="CHEBI:29985"/>
    </ligand>
</feature>
<feature type="glycosylation site" description="N-linked (GlcNAc...) asparagine" evidence="3">
    <location>
        <position position="94"/>
    </location>
</feature>
<feature type="glycosylation site" description="N-linked (GlcNAc...) asparagine" evidence="5">
    <location>
        <position position="114"/>
    </location>
</feature>
<feature type="glycosylation site" description="N-linked (GlcNAc...) asparagine" evidence="3">
    <location>
        <position position="119"/>
    </location>
</feature>
<feature type="glycosylation site" description="N-linked (GlcNAc...) asparagine" evidence="5">
    <location>
        <position position="229"/>
    </location>
</feature>
<feature type="glycosylation site" description="N-linked (GlcNAc...) asparagine" evidence="3">
    <location>
        <position position="343"/>
    </location>
</feature>
<feature type="glycosylation site" description="N-linked (GlcNAc...) asparagine" evidence="5">
    <location>
        <position position="510"/>
    </location>
</feature>
<feature type="disulfide bond" evidence="2">
    <location>
        <begin position="49"/>
        <end position="73"/>
    </location>
</feature>
<feature type="disulfide bond" evidence="2">
    <location>
        <begin position="191"/>
        <end position="195"/>
    </location>
</feature>
<proteinExistence type="evidence at protein level"/>
<reference key="1">
    <citation type="journal article" date="1995" name="Gene">
        <title>Cloning of cDNA and genomic structure of the mouse gamma-glutamyl transpeptidase-encoding gene.</title>
        <authorList>
            <person name="Shi Z.Z."/>
            <person name="Habib G.M."/>
            <person name="Lebovitz R.M."/>
            <person name="Lieberman M.W."/>
        </authorList>
    </citation>
    <scope>NUCLEOTIDE SEQUENCE [MRNA]</scope>
    <source>
        <strain>C57BL/6J</strain>
        <tissue>Kidney</tissue>
    </source>
</reference>
<reference key="2">
    <citation type="journal article" date="2004" name="Genome Res.">
        <title>The status, quality, and expansion of the NIH full-length cDNA project: the Mammalian Gene Collection (MGC).</title>
        <authorList>
            <consortium name="The MGC Project Team"/>
        </authorList>
    </citation>
    <scope>NUCLEOTIDE SEQUENCE [LARGE SCALE MRNA]</scope>
    <source>
        <strain>C57BL/6J</strain>
        <tissue>Mammary tumor</tissue>
    </source>
</reference>
<reference key="3">
    <citation type="journal article" date="1996" name="Proc. Natl. Acad. Sci. U.S.A.">
        <title>Growth retardation and cysteine deficiency in gamma-glutamyl transpeptidase-deficient mice.</title>
        <authorList>
            <person name="Lieberman M.W."/>
            <person name="Wiseman A.L."/>
            <person name="Shi Z.Z."/>
            <person name="Carter B.Z."/>
            <person name="Barrios R."/>
            <person name="Ou C.N."/>
            <person name="Chevez-Barrios P."/>
            <person name="Wang Y."/>
            <person name="Habib G.M."/>
            <person name="Goodman J.C."/>
            <person name="Huang S.L."/>
            <person name="Lebovitz R.M."/>
            <person name="Matzuk M.M."/>
        </authorList>
    </citation>
    <scope>DISRUPTION PHENOTYPE</scope>
    <scope>FUNCTION</scope>
</reference>
<reference key="4">
    <citation type="journal article" date="1999" name="Comp. Biochem. Physiol.">
        <title>Gamma-glutamyl transpeptidase gene organization and expression: a comparative analysis in rat, mouse, pig and human species.</title>
        <authorList>
            <person name="Chikhi N."/>
            <person name="Holic N."/>
            <person name="Guellaen G."/>
            <person name="Laperche Y."/>
        </authorList>
    </citation>
    <scope>GENE ORGANIZATION</scope>
    <scope>ALTERNATIVE PROMOTER USAGE</scope>
</reference>
<reference key="5">
    <citation type="journal article" date="1997" name="J. Biol. Chem.">
        <title>Mice with genetic gamma-glutamyl transpeptidase deficiency exhibit glutathionuria, severe growth failure, reduced life spans, and infertility.</title>
        <authorList>
            <person name="Harding C.O."/>
            <person name="Williams P."/>
            <person name="Wagner E."/>
            <person name="Chang D.S."/>
            <person name="Wild K."/>
            <person name="Colwell R.E."/>
            <person name="Wolff J.A."/>
        </authorList>
    </citation>
    <scope>DISEASE</scope>
</reference>
<reference key="6">
    <citation type="journal article" date="2003" name="Endocrinology">
        <title>Reversible skeletal abnormalities in gamma-glutamyl transpeptidase-deficient mice.</title>
        <authorList>
            <person name="Levasseur R."/>
            <person name="Barrios R."/>
            <person name="Elefteriou F."/>
            <person name="Glass D.A. II"/>
            <person name="Lieberman M.W."/>
            <person name="Karsenty G."/>
        </authorList>
    </citation>
    <scope>DISRUPTION PHENOTYPE</scope>
    <scope>FUNCTION</scope>
</reference>
<reference key="7">
    <citation type="journal article" date="2009" name="Nat. Biotechnol.">
        <title>Mass-spectrometric identification and relative quantification of N-linked cell surface glycoproteins.</title>
        <authorList>
            <person name="Wollscheid B."/>
            <person name="Bausch-Fluck D."/>
            <person name="Henderson C."/>
            <person name="O'Brien R."/>
            <person name="Bibel M."/>
            <person name="Schiess R."/>
            <person name="Aebersold R."/>
            <person name="Watts J.D."/>
        </authorList>
    </citation>
    <scope>GLYCOSYLATION [LARGE SCALE ANALYSIS] AT ASN-114; ASN-229 AND ASN-510</scope>
</reference>
<reference key="8">
    <citation type="journal article" date="2010" name="Cell">
        <title>A tissue-specific atlas of mouse protein phosphorylation and expression.</title>
        <authorList>
            <person name="Huttlin E.L."/>
            <person name="Jedrychowski M.P."/>
            <person name="Elias J.E."/>
            <person name="Goswami T."/>
            <person name="Rad R."/>
            <person name="Beausoleil S.A."/>
            <person name="Villen J."/>
            <person name="Haas W."/>
            <person name="Sowa M.E."/>
            <person name="Gygi S.P."/>
        </authorList>
    </citation>
    <scope>IDENTIFICATION BY MASS SPECTROMETRY [LARGE SCALE ANALYSIS]</scope>
    <source>
        <tissue>Kidney</tissue>
        <tissue>Liver</tissue>
        <tissue>Pancreas</tissue>
    </source>
</reference>
<dbReference type="EC" id="3.4.19.13" evidence="2"/>
<dbReference type="EC" id="2.3.2.2" evidence="2"/>
<dbReference type="EC" id="3.4.19.14" evidence="1"/>
<dbReference type="EMBL" id="U30509">
    <property type="protein sequence ID" value="AAA97395.1"/>
    <property type="molecule type" value="mRNA"/>
</dbReference>
<dbReference type="EMBL" id="BC012969">
    <property type="protein sequence ID" value="AAH12969.1"/>
    <property type="molecule type" value="mRNA"/>
</dbReference>
<dbReference type="CCDS" id="CCDS23927.1"/>
<dbReference type="PIR" id="JC4570">
    <property type="entry name" value="JC4570"/>
</dbReference>
<dbReference type="RefSeq" id="NP_001292921.1">
    <property type="nucleotide sequence ID" value="NM_001305992.2"/>
</dbReference>
<dbReference type="RefSeq" id="NP_001366466.1">
    <property type="nucleotide sequence ID" value="NM_001379537.1"/>
</dbReference>
<dbReference type="RefSeq" id="NP_001366467.1">
    <property type="nucleotide sequence ID" value="NM_001379538.1"/>
</dbReference>
<dbReference type="RefSeq" id="NP_001366468.1">
    <property type="nucleotide sequence ID" value="NM_001379539.1"/>
</dbReference>
<dbReference type="RefSeq" id="NP_001366469.1">
    <property type="nucleotide sequence ID" value="NM_001379540.1"/>
</dbReference>
<dbReference type="RefSeq" id="NP_001366470.1">
    <property type="nucleotide sequence ID" value="NM_001379541.1"/>
</dbReference>
<dbReference type="RefSeq" id="NP_001415419.1">
    <property type="nucleotide sequence ID" value="NM_001428490.1"/>
</dbReference>
<dbReference type="RefSeq" id="NP_001415420.1">
    <property type="nucleotide sequence ID" value="NM_001428491.1"/>
</dbReference>
<dbReference type="RefSeq" id="NP_001415421.1">
    <property type="nucleotide sequence ID" value="NM_001428492.1"/>
</dbReference>
<dbReference type="RefSeq" id="NP_032142.1">
    <property type="nucleotide sequence ID" value="NM_008116.4"/>
</dbReference>
<dbReference type="RefSeq" id="XP_006513293.1">
    <property type="nucleotide sequence ID" value="XM_006513230.3"/>
</dbReference>
<dbReference type="RefSeq" id="XP_006513294.1">
    <property type="nucleotide sequence ID" value="XM_006513231.3"/>
</dbReference>
<dbReference type="SMR" id="Q60928"/>
<dbReference type="FunCoup" id="Q60928">
    <property type="interactions" value="271"/>
</dbReference>
<dbReference type="STRING" id="10090.ENSMUSP00000006508"/>
<dbReference type="GlyConnect" id="2333">
    <property type="glycosylation" value="1 N-Linked glycan (1 site)"/>
</dbReference>
<dbReference type="GlyCosmos" id="Q60928">
    <property type="glycosylation" value="6 sites, 10 glycans"/>
</dbReference>
<dbReference type="GlyGen" id="Q60928">
    <property type="glycosylation" value="6 sites, 6 N-linked glycans (5 sites)"/>
</dbReference>
<dbReference type="iPTMnet" id="Q60928"/>
<dbReference type="PhosphoSitePlus" id="Q60928"/>
<dbReference type="jPOST" id="Q60928"/>
<dbReference type="PaxDb" id="10090-ENSMUSP00000006508"/>
<dbReference type="ProteomicsDB" id="266802"/>
<dbReference type="TopDownProteomics" id="Q60928"/>
<dbReference type="DNASU" id="14598"/>
<dbReference type="Ensembl" id="ENSMUST00000006508.10">
    <property type="protein sequence ID" value="ENSMUSP00000006508.4"/>
    <property type="gene ID" value="ENSMUSG00000006345.11"/>
</dbReference>
<dbReference type="Ensembl" id="ENSMUST00000134503.8">
    <property type="protein sequence ID" value="ENSMUSP00000121312.2"/>
    <property type="gene ID" value="ENSMUSG00000006345.11"/>
</dbReference>
<dbReference type="GeneID" id="14598"/>
<dbReference type="KEGG" id="mmu:14598"/>
<dbReference type="UCSC" id="uc007fqo.2">
    <property type="organism name" value="mouse"/>
</dbReference>
<dbReference type="AGR" id="MGI:95706"/>
<dbReference type="CTD" id="2678"/>
<dbReference type="MGI" id="MGI:95706">
    <property type="gene designation" value="Ggt1"/>
</dbReference>
<dbReference type="VEuPathDB" id="HostDB:ENSMUSG00000006345"/>
<dbReference type="eggNOG" id="KOG2410">
    <property type="taxonomic scope" value="Eukaryota"/>
</dbReference>
<dbReference type="GeneTree" id="ENSGT00940000154601"/>
<dbReference type="HOGENOM" id="CLU_014813_4_1_1"/>
<dbReference type="InParanoid" id="Q60928"/>
<dbReference type="OMA" id="GFMLVHL"/>
<dbReference type="OrthoDB" id="1081007at2759"/>
<dbReference type="PhylomeDB" id="Q60928"/>
<dbReference type="TreeFam" id="TF313608"/>
<dbReference type="Reactome" id="R-MMU-174403">
    <property type="pathway name" value="Glutathione synthesis and recycling"/>
</dbReference>
<dbReference type="Reactome" id="R-MMU-2142691">
    <property type="pathway name" value="Synthesis of Leukotrienes (LT) and Eoxins (EX)"/>
</dbReference>
<dbReference type="Reactome" id="R-MMU-5423646">
    <property type="pathway name" value="Aflatoxin activation and detoxification"/>
</dbReference>
<dbReference type="Reactome" id="R-MMU-9753281">
    <property type="pathway name" value="Paracetamol ADME"/>
</dbReference>
<dbReference type="SABIO-RK" id="Q60928"/>
<dbReference type="UniPathway" id="UPA00204"/>
<dbReference type="UniPathway" id="UPA00880"/>
<dbReference type="BioGRID-ORCS" id="14598">
    <property type="hits" value="2 hits in 78 CRISPR screens"/>
</dbReference>
<dbReference type="ChiTaRS" id="Ggt1">
    <property type="organism name" value="mouse"/>
</dbReference>
<dbReference type="PRO" id="PR:Q60928"/>
<dbReference type="Proteomes" id="UP000000589">
    <property type="component" value="Chromosome 10"/>
</dbReference>
<dbReference type="RNAct" id="Q60928">
    <property type="molecule type" value="protein"/>
</dbReference>
<dbReference type="Bgee" id="ENSMUSG00000006345">
    <property type="expression patterns" value="Expressed in right kidney and 128 other cell types or tissues"/>
</dbReference>
<dbReference type="ExpressionAtlas" id="Q60928">
    <property type="expression patterns" value="baseline and differential"/>
</dbReference>
<dbReference type="GO" id="GO:0005615">
    <property type="term" value="C:extracellular space"/>
    <property type="evidence" value="ECO:0007669"/>
    <property type="project" value="Ensembl"/>
</dbReference>
<dbReference type="GO" id="GO:0005886">
    <property type="term" value="C:plasma membrane"/>
    <property type="evidence" value="ECO:0000250"/>
    <property type="project" value="UniProtKB"/>
</dbReference>
<dbReference type="GO" id="GO:0031982">
    <property type="term" value="C:vesicle"/>
    <property type="evidence" value="ECO:0000314"/>
    <property type="project" value="MGI"/>
</dbReference>
<dbReference type="GO" id="GO:0036374">
    <property type="term" value="F:glutathione hydrolase activity"/>
    <property type="evidence" value="ECO:0000250"/>
    <property type="project" value="UniProtKB"/>
</dbReference>
<dbReference type="GO" id="GO:0103068">
    <property type="term" value="F:leukotriene C4 gamma-glutamyl transferase activity"/>
    <property type="evidence" value="ECO:0007669"/>
    <property type="project" value="UniProtKB-EC"/>
</dbReference>
<dbReference type="GO" id="GO:0002951">
    <property type="term" value="F:leukotriene-C(4) hydrolase"/>
    <property type="evidence" value="ECO:0007669"/>
    <property type="project" value="UniProtKB-EC"/>
</dbReference>
<dbReference type="GO" id="GO:0034599">
    <property type="term" value="P:cellular response to oxidative stress"/>
    <property type="evidence" value="ECO:0007669"/>
    <property type="project" value="Ensembl"/>
</dbReference>
<dbReference type="GO" id="GO:0019344">
    <property type="term" value="P:cysteine biosynthetic process"/>
    <property type="evidence" value="ECO:0000315"/>
    <property type="project" value="UniProtKB"/>
</dbReference>
<dbReference type="GO" id="GO:0006536">
    <property type="term" value="P:glutamate metabolic process"/>
    <property type="evidence" value="ECO:0000250"/>
    <property type="project" value="UniProtKB"/>
</dbReference>
<dbReference type="GO" id="GO:0006750">
    <property type="term" value="P:glutathione biosynthetic process"/>
    <property type="evidence" value="ECO:0000315"/>
    <property type="project" value="UniProtKB"/>
</dbReference>
<dbReference type="GO" id="GO:0006751">
    <property type="term" value="P:glutathione catabolic process"/>
    <property type="evidence" value="ECO:0000250"/>
    <property type="project" value="UniProtKB"/>
</dbReference>
<dbReference type="GO" id="GO:0006749">
    <property type="term" value="P:glutathione metabolic process"/>
    <property type="evidence" value="ECO:0000304"/>
    <property type="project" value="MGI"/>
</dbReference>
<dbReference type="GO" id="GO:0061017">
    <property type="term" value="P:hepatoblast differentiation"/>
    <property type="evidence" value="ECO:0007669"/>
    <property type="project" value="Ensembl"/>
</dbReference>
<dbReference type="GO" id="GO:0070365">
    <property type="term" value="P:hepatocyte differentiation"/>
    <property type="evidence" value="ECO:0007669"/>
    <property type="project" value="Ensembl"/>
</dbReference>
<dbReference type="GO" id="GO:0097421">
    <property type="term" value="P:liver regeneration"/>
    <property type="evidence" value="ECO:0007669"/>
    <property type="project" value="Ensembl"/>
</dbReference>
<dbReference type="GO" id="GO:0031179">
    <property type="term" value="P:peptide modification"/>
    <property type="evidence" value="ECO:0007669"/>
    <property type="project" value="Ensembl"/>
</dbReference>
<dbReference type="GO" id="GO:0002682">
    <property type="term" value="P:regulation of immune system process"/>
    <property type="evidence" value="ECO:0000315"/>
    <property type="project" value="UniProtKB"/>
</dbReference>
<dbReference type="GO" id="GO:0050727">
    <property type="term" value="P:regulation of inflammatory response"/>
    <property type="evidence" value="ECO:0000315"/>
    <property type="project" value="UniProtKB"/>
</dbReference>
<dbReference type="GO" id="GO:0097305">
    <property type="term" value="P:response to alcohol"/>
    <property type="evidence" value="ECO:0007669"/>
    <property type="project" value="Ensembl"/>
</dbReference>
<dbReference type="GO" id="GO:0032355">
    <property type="term" value="P:response to estradiol"/>
    <property type="evidence" value="ECO:0007669"/>
    <property type="project" value="Ensembl"/>
</dbReference>
<dbReference type="GO" id="GO:0032496">
    <property type="term" value="P:response to lipopolysaccharide"/>
    <property type="evidence" value="ECO:0007669"/>
    <property type="project" value="Ensembl"/>
</dbReference>
<dbReference type="GO" id="GO:0034612">
    <property type="term" value="P:response to tumor necrosis factor"/>
    <property type="evidence" value="ECO:0007669"/>
    <property type="project" value="Ensembl"/>
</dbReference>
<dbReference type="GO" id="GO:0007283">
    <property type="term" value="P:spermatogenesis"/>
    <property type="evidence" value="ECO:0000315"/>
    <property type="project" value="MGI"/>
</dbReference>
<dbReference type="GO" id="GO:0031638">
    <property type="term" value="P:zymogen activation"/>
    <property type="evidence" value="ECO:0000250"/>
    <property type="project" value="UniProtKB"/>
</dbReference>
<dbReference type="FunFam" id="3.60.20.40:FF:000007">
    <property type="entry name" value="Glutathione hydrolase 1 proenzyme"/>
    <property type="match status" value="1"/>
</dbReference>
<dbReference type="FunFam" id="1.10.246.130:FF:000002">
    <property type="entry name" value="glutathione hydrolase 1 proenzyme"/>
    <property type="match status" value="1"/>
</dbReference>
<dbReference type="Gene3D" id="1.10.246.130">
    <property type="match status" value="1"/>
</dbReference>
<dbReference type="Gene3D" id="3.60.20.40">
    <property type="match status" value="1"/>
</dbReference>
<dbReference type="InterPro" id="IPR055262">
    <property type="entry name" value="GGT_CS"/>
</dbReference>
<dbReference type="InterPro" id="IPR043138">
    <property type="entry name" value="GGT_lsub_C"/>
</dbReference>
<dbReference type="InterPro" id="IPR000101">
    <property type="entry name" value="GGT_peptidase"/>
</dbReference>
<dbReference type="InterPro" id="IPR043137">
    <property type="entry name" value="GGT_ssub"/>
</dbReference>
<dbReference type="InterPro" id="IPR029055">
    <property type="entry name" value="Ntn_hydrolases_N"/>
</dbReference>
<dbReference type="NCBIfam" id="TIGR00066">
    <property type="entry name" value="g_glut_trans"/>
    <property type="match status" value="1"/>
</dbReference>
<dbReference type="PANTHER" id="PTHR11686">
    <property type="entry name" value="GAMMA GLUTAMYL TRANSPEPTIDASE"/>
    <property type="match status" value="1"/>
</dbReference>
<dbReference type="PANTHER" id="PTHR11686:SF56">
    <property type="entry name" value="GLUTATHIONE HYDROLASE 1 PROENZYME-RELATED"/>
    <property type="match status" value="1"/>
</dbReference>
<dbReference type="Pfam" id="PF01019">
    <property type="entry name" value="G_glu_transpept"/>
    <property type="match status" value="1"/>
</dbReference>
<dbReference type="PRINTS" id="PR01210">
    <property type="entry name" value="GGTRANSPTASE"/>
</dbReference>
<dbReference type="SUPFAM" id="SSF56235">
    <property type="entry name" value="N-terminal nucleophile aminohydrolases (Ntn hydrolases)"/>
    <property type="match status" value="1"/>
</dbReference>
<dbReference type="PROSITE" id="PS00462">
    <property type="entry name" value="G_GLU_TRANSPEPTIDASE"/>
    <property type="match status" value="1"/>
</dbReference>
<keyword id="KW-0012">Acyltransferase</keyword>
<keyword id="KW-1003">Cell membrane</keyword>
<keyword id="KW-1015">Disulfide bond</keyword>
<keyword id="KW-0317">Glutathione biosynthesis</keyword>
<keyword id="KW-0325">Glycoprotein</keyword>
<keyword id="KW-0378">Hydrolase</keyword>
<keyword id="KW-0472">Membrane</keyword>
<keyword id="KW-0645">Protease</keyword>
<keyword id="KW-1185">Reference proteome</keyword>
<keyword id="KW-0735">Signal-anchor</keyword>
<keyword id="KW-0808">Transferase</keyword>
<keyword id="KW-0812">Transmembrane</keyword>
<keyword id="KW-1133">Transmembrane helix</keyword>
<keyword id="KW-0865">Zymogen</keyword>
<gene>
    <name type="primary">Ggt1</name>
    <name type="synonym">Ggt</name>
    <name type="synonym">Ggtp</name>
</gene>
<accession>Q60928</accession>